<feature type="chain" id="PRO_0000318718" description="MORF4 family-associated protein 1-like 1">
    <location>
        <begin position="1"/>
        <end position="127"/>
    </location>
</feature>
<feature type="coiled-coil region" evidence="1">
    <location>
        <begin position="87"/>
        <end position="118"/>
    </location>
</feature>
<feature type="sequence conflict" description="In Ref. 5; AAH66897." evidence="2" ref="5">
    <original>N</original>
    <variation>H</variation>
    <location>
        <position position="33"/>
    </location>
</feature>
<reference key="1">
    <citation type="journal article" date="2000" name="Proc. Natl. Acad. Sci. U.S.A.">
        <title>Gene expression profiling in the human hypothalamus-pituitary-adrenal axis and full-length cDNA cloning.</title>
        <authorList>
            <person name="Hu R.-M."/>
            <person name="Han Z.-G."/>
            <person name="Song H.-D."/>
            <person name="Peng Y.-D."/>
            <person name="Huang Q.-H."/>
            <person name="Ren S.-X."/>
            <person name="Gu Y.-J."/>
            <person name="Huang C.-H."/>
            <person name="Li Y.-B."/>
            <person name="Jiang C.-L."/>
            <person name="Fu G."/>
            <person name="Zhang Q.-H."/>
            <person name="Gu B.-W."/>
            <person name="Dai M."/>
            <person name="Mao Y.-F."/>
            <person name="Gao G.-F."/>
            <person name="Rong R."/>
            <person name="Ye M."/>
            <person name="Zhou J."/>
            <person name="Xu S.-H."/>
            <person name="Gu J."/>
            <person name="Shi J.-X."/>
            <person name="Jin W.-R."/>
            <person name="Zhang C.-K."/>
            <person name="Wu T.-M."/>
            <person name="Huang G.-Y."/>
            <person name="Chen Z."/>
            <person name="Chen M.-D."/>
            <person name="Chen J.-L."/>
        </authorList>
    </citation>
    <scope>NUCLEOTIDE SEQUENCE [LARGE SCALE MRNA]</scope>
    <source>
        <tissue>Adrenal gland</tissue>
    </source>
</reference>
<reference key="2">
    <citation type="journal article" date="2004" name="Proc. Natl. Acad. Sci. U.S.A.">
        <title>Large-scale cDNA transfection screening for genes related to cancer development and progression.</title>
        <authorList>
            <person name="Wan D."/>
            <person name="Gong Y."/>
            <person name="Qin W."/>
            <person name="Zhang P."/>
            <person name="Li J."/>
            <person name="Wei L."/>
            <person name="Zhou X."/>
            <person name="Li H."/>
            <person name="Qiu X."/>
            <person name="Zhong F."/>
            <person name="He L."/>
            <person name="Yu J."/>
            <person name="Yao G."/>
            <person name="Jiang H."/>
            <person name="Qian L."/>
            <person name="Yu Y."/>
            <person name="Shu H."/>
            <person name="Chen X."/>
            <person name="Xu H."/>
            <person name="Guo M."/>
            <person name="Pan Z."/>
            <person name="Chen Y."/>
            <person name="Ge C."/>
            <person name="Yang S."/>
            <person name="Gu J."/>
        </authorList>
    </citation>
    <scope>NUCLEOTIDE SEQUENCE [LARGE SCALE MRNA]</scope>
</reference>
<reference key="3">
    <citation type="journal article" date="2004" name="Nat. Genet.">
        <title>Complete sequencing and characterization of 21,243 full-length human cDNAs.</title>
        <authorList>
            <person name="Ota T."/>
            <person name="Suzuki Y."/>
            <person name="Nishikawa T."/>
            <person name="Otsuki T."/>
            <person name="Sugiyama T."/>
            <person name="Irie R."/>
            <person name="Wakamatsu A."/>
            <person name="Hayashi K."/>
            <person name="Sato H."/>
            <person name="Nagai K."/>
            <person name="Kimura K."/>
            <person name="Makita H."/>
            <person name="Sekine M."/>
            <person name="Obayashi M."/>
            <person name="Nishi T."/>
            <person name="Shibahara T."/>
            <person name="Tanaka T."/>
            <person name="Ishii S."/>
            <person name="Yamamoto J."/>
            <person name="Saito K."/>
            <person name="Kawai Y."/>
            <person name="Isono Y."/>
            <person name="Nakamura Y."/>
            <person name="Nagahari K."/>
            <person name="Murakami K."/>
            <person name="Yasuda T."/>
            <person name="Iwayanagi T."/>
            <person name="Wagatsuma M."/>
            <person name="Shiratori A."/>
            <person name="Sudo H."/>
            <person name="Hosoiri T."/>
            <person name="Kaku Y."/>
            <person name="Kodaira H."/>
            <person name="Kondo H."/>
            <person name="Sugawara M."/>
            <person name="Takahashi M."/>
            <person name="Kanda K."/>
            <person name="Yokoi T."/>
            <person name="Furuya T."/>
            <person name="Kikkawa E."/>
            <person name="Omura Y."/>
            <person name="Abe K."/>
            <person name="Kamihara K."/>
            <person name="Katsuta N."/>
            <person name="Sato K."/>
            <person name="Tanikawa M."/>
            <person name="Yamazaki M."/>
            <person name="Ninomiya K."/>
            <person name="Ishibashi T."/>
            <person name="Yamashita H."/>
            <person name="Murakawa K."/>
            <person name="Fujimori K."/>
            <person name="Tanai H."/>
            <person name="Kimata M."/>
            <person name="Watanabe M."/>
            <person name="Hiraoka S."/>
            <person name="Chiba Y."/>
            <person name="Ishida S."/>
            <person name="Ono Y."/>
            <person name="Takiguchi S."/>
            <person name="Watanabe S."/>
            <person name="Yosida M."/>
            <person name="Hotuta T."/>
            <person name="Kusano J."/>
            <person name="Kanehori K."/>
            <person name="Takahashi-Fujii A."/>
            <person name="Hara H."/>
            <person name="Tanase T.-O."/>
            <person name="Nomura Y."/>
            <person name="Togiya S."/>
            <person name="Komai F."/>
            <person name="Hara R."/>
            <person name="Takeuchi K."/>
            <person name="Arita M."/>
            <person name="Imose N."/>
            <person name="Musashino K."/>
            <person name="Yuuki H."/>
            <person name="Oshima A."/>
            <person name="Sasaki N."/>
            <person name="Aotsuka S."/>
            <person name="Yoshikawa Y."/>
            <person name="Matsunawa H."/>
            <person name="Ichihara T."/>
            <person name="Shiohata N."/>
            <person name="Sano S."/>
            <person name="Moriya S."/>
            <person name="Momiyama H."/>
            <person name="Satoh N."/>
            <person name="Takami S."/>
            <person name="Terashima Y."/>
            <person name="Suzuki O."/>
            <person name="Nakagawa S."/>
            <person name="Senoh A."/>
            <person name="Mizoguchi H."/>
            <person name="Goto Y."/>
            <person name="Shimizu F."/>
            <person name="Wakebe H."/>
            <person name="Hishigaki H."/>
            <person name="Watanabe T."/>
            <person name="Sugiyama A."/>
            <person name="Takemoto M."/>
            <person name="Kawakami B."/>
            <person name="Yamazaki M."/>
            <person name="Watanabe K."/>
            <person name="Kumagai A."/>
            <person name="Itakura S."/>
            <person name="Fukuzumi Y."/>
            <person name="Fujimori Y."/>
            <person name="Komiyama M."/>
            <person name="Tashiro H."/>
            <person name="Tanigami A."/>
            <person name="Fujiwara T."/>
            <person name="Ono T."/>
            <person name="Yamada K."/>
            <person name="Fujii Y."/>
            <person name="Ozaki K."/>
            <person name="Hirao M."/>
            <person name="Ohmori Y."/>
            <person name="Kawabata A."/>
            <person name="Hikiji T."/>
            <person name="Kobatake N."/>
            <person name="Inagaki H."/>
            <person name="Ikema Y."/>
            <person name="Okamoto S."/>
            <person name="Okitani R."/>
            <person name="Kawakami T."/>
            <person name="Noguchi S."/>
            <person name="Itoh T."/>
            <person name="Shigeta K."/>
            <person name="Senba T."/>
            <person name="Matsumura K."/>
            <person name="Nakajima Y."/>
            <person name="Mizuno T."/>
            <person name="Morinaga M."/>
            <person name="Sasaki M."/>
            <person name="Togashi T."/>
            <person name="Oyama M."/>
            <person name="Hata H."/>
            <person name="Watanabe M."/>
            <person name="Komatsu T."/>
            <person name="Mizushima-Sugano J."/>
            <person name="Satoh T."/>
            <person name="Shirai Y."/>
            <person name="Takahashi Y."/>
            <person name="Nakagawa K."/>
            <person name="Okumura K."/>
            <person name="Nagase T."/>
            <person name="Nomura N."/>
            <person name="Kikuchi H."/>
            <person name="Masuho Y."/>
            <person name="Yamashita R."/>
            <person name="Nakai K."/>
            <person name="Yada T."/>
            <person name="Nakamura Y."/>
            <person name="Ohara O."/>
            <person name="Isogai T."/>
            <person name="Sugano S."/>
        </authorList>
    </citation>
    <scope>NUCLEOTIDE SEQUENCE [LARGE SCALE MRNA]</scope>
    <source>
        <tissue>Ovary</tissue>
    </source>
</reference>
<reference key="4">
    <citation type="submission" date="2005-07" db="EMBL/GenBank/DDBJ databases">
        <authorList>
            <person name="Mural R.J."/>
            <person name="Istrail S."/>
            <person name="Sutton G.G."/>
            <person name="Florea L."/>
            <person name="Halpern A.L."/>
            <person name="Mobarry C.M."/>
            <person name="Lippert R."/>
            <person name="Walenz B."/>
            <person name="Shatkay H."/>
            <person name="Dew I."/>
            <person name="Miller J.R."/>
            <person name="Flanigan M.J."/>
            <person name="Edwards N.J."/>
            <person name="Bolanos R."/>
            <person name="Fasulo D."/>
            <person name="Halldorsson B.V."/>
            <person name="Hannenhalli S."/>
            <person name="Turner R."/>
            <person name="Yooseph S."/>
            <person name="Lu F."/>
            <person name="Nusskern D.R."/>
            <person name="Shue B.C."/>
            <person name="Zheng X.H."/>
            <person name="Zhong F."/>
            <person name="Delcher A.L."/>
            <person name="Huson D.H."/>
            <person name="Kravitz S.A."/>
            <person name="Mouchard L."/>
            <person name="Reinert K."/>
            <person name="Remington K.A."/>
            <person name="Clark A.G."/>
            <person name="Waterman M.S."/>
            <person name="Eichler E.E."/>
            <person name="Adams M.D."/>
            <person name="Hunkapiller M.W."/>
            <person name="Myers E.W."/>
            <person name="Venter J.C."/>
        </authorList>
    </citation>
    <scope>NUCLEOTIDE SEQUENCE [LARGE SCALE GENOMIC DNA]</scope>
</reference>
<reference key="5">
    <citation type="journal article" date="2004" name="Genome Res.">
        <title>The status, quality, and expansion of the NIH full-length cDNA project: the Mammalian Gene Collection (MGC).</title>
        <authorList>
            <consortium name="The MGC Project Team"/>
        </authorList>
    </citation>
    <scope>NUCLEOTIDE SEQUENCE [LARGE SCALE MRNA]</scope>
    <source>
        <tissue>Hippocampus</tissue>
        <tissue>Placenta</tissue>
    </source>
</reference>
<name>MR1L1_HUMAN</name>
<protein>
    <recommendedName>
        <fullName>MORF4 family-associated protein 1-like 1</fullName>
    </recommendedName>
</protein>
<sequence>MRPLDIDEVEAPEEVEVLEPEEDFEQFLLPVINEMREDIASLIREHGRAYLRTRSKLWEMDNMLIQIKTQVEASEESALNHVQHPSGEADERVSELCEKAEEKAKEIAKMAEMLVELVWRIERSESS</sequence>
<proteinExistence type="evidence at protein level"/>
<gene>
    <name type="primary">MRFAP1L1</name>
    <name type="ORF">PP784</name>
</gene>
<organism>
    <name type="scientific">Homo sapiens</name>
    <name type="common">Human</name>
    <dbReference type="NCBI Taxonomy" id="9606"/>
    <lineage>
        <taxon>Eukaryota</taxon>
        <taxon>Metazoa</taxon>
        <taxon>Chordata</taxon>
        <taxon>Craniata</taxon>
        <taxon>Vertebrata</taxon>
        <taxon>Euteleostomi</taxon>
        <taxon>Mammalia</taxon>
        <taxon>Eutheria</taxon>
        <taxon>Euarchontoglires</taxon>
        <taxon>Primates</taxon>
        <taxon>Haplorrhini</taxon>
        <taxon>Catarrhini</taxon>
        <taxon>Hominidae</taxon>
        <taxon>Homo</taxon>
    </lineage>
</organism>
<keyword id="KW-0175">Coiled coil</keyword>
<keyword id="KW-1267">Proteomics identification</keyword>
<keyword id="KW-1185">Reference proteome</keyword>
<dbReference type="EMBL" id="AF155654">
    <property type="protein sequence ID" value="AAF67011.1"/>
    <property type="status" value="ALT_FRAME"/>
    <property type="molecule type" value="mRNA"/>
</dbReference>
<dbReference type="EMBL" id="AF258591">
    <property type="protein sequence ID" value="AAG23794.1"/>
    <property type="molecule type" value="mRNA"/>
</dbReference>
<dbReference type="EMBL" id="AK312676">
    <property type="protein sequence ID" value="BAG35557.1"/>
    <property type="molecule type" value="mRNA"/>
</dbReference>
<dbReference type="EMBL" id="CH471131">
    <property type="protein sequence ID" value="EAW82383.1"/>
    <property type="molecule type" value="Genomic_DNA"/>
</dbReference>
<dbReference type="EMBL" id="BC008087">
    <property type="protein sequence ID" value="AAH08087.1"/>
    <property type="molecule type" value="mRNA"/>
</dbReference>
<dbReference type="EMBL" id="BC066897">
    <property type="protein sequence ID" value="AAH66897.1"/>
    <property type="molecule type" value="mRNA"/>
</dbReference>
<dbReference type="CCDS" id="CCDS3392.1"/>
<dbReference type="RefSeq" id="NP_982287.1">
    <property type="nucleotide sequence ID" value="NM_203462.3"/>
</dbReference>
<dbReference type="RefSeq" id="XP_005247989.1">
    <property type="nucleotide sequence ID" value="XM_005247932.1"/>
</dbReference>
<dbReference type="SMR" id="Q96HT8"/>
<dbReference type="BioGRID" id="125400">
    <property type="interactions" value="115"/>
</dbReference>
<dbReference type="DIP" id="DIP-29019N"/>
<dbReference type="FunCoup" id="Q96HT8">
    <property type="interactions" value="88"/>
</dbReference>
<dbReference type="IntAct" id="Q96HT8">
    <property type="interactions" value="117"/>
</dbReference>
<dbReference type="MINT" id="Q96HT8"/>
<dbReference type="STRING" id="9606.ENSP00000318154"/>
<dbReference type="iPTMnet" id="Q96HT8"/>
<dbReference type="PhosphoSitePlus" id="Q96HT8"/>
<dbReference type="BioMuta" id="MRFAP1L1"/>
<dbReference type="DMDM" id="74731978"/>
<dbReference type="jPOST" id="Q96HT8"/>
<dbReference type="MassIVE" id="Q96HT8"/>
<dbReference type="PaxDb" id="9606-ENSP00000318154"/>
<dbReference type="PeptideAtlas" id="Q96HT8"/>
<dbReference type="ProteomicsDB" id="76784"/>
<dbReference type="Pumba" id="Q96HT8"/>
<dbReference type="Antibodypedia" id="67834">
    <property type="antibodies" value="90 antibodies from 14 providers"/>
</dbReference>
<dbReference type="DNASU" id="114932"/>
<dbReference type="Ensembl" id="ENST00000320848.7">
    <property type="protein sequence ID" value="ENSP00000318154.6"/>
    <property type="gene ID" value="ENSG00000178988.11"/>
</dbReference>
<dbReference type="GeneID" id="114932"/>
<dbReference type="KEGG" id="hsa:114932"/>
<dbReference type="MANE-Select" id="ENST00000320848.7">
    <property type="protein sequence ID" value="ENSP00000318154.6"/>
    <property type="RefSeq nucleotide sequence ID" value="NM_203462.3"/>
    <property type="RefSeq protein sequence ID" value="NP_982287.1"/>
</dbReference>
<dbReference type="UCSC" id="uc003gjo.5">
    <property type="organism name" value="human"/>
</dbReference>
<dbReference type="AGR" id="HGNC:28796"/>
<dbReference type="CTD" id="114932"/>
<dbReference type="GeneCards" id="MRFAP1L1"/>
<dbReference type="HGNC" id="HGNC:28796">
    <property type="gene designation" value="MRFAP1L1"/>
</dbReference>
<dbReference type="HPA" id="ENSG00000178988">
    <property type="expression patterns" value="Low tissue specificity"/>
</dbReference>
<dbReference type="neXtProt" id="NX_Q96HT8"/>
<dbReference type="OpenTargets" id="ENSG00000178988"/>
<dbReference type="PharmGKB" id="PA142671333"/>
<dbReference type="VEuPathDB" id="HostDB:ENSG00000178988"/>
<dbReference type="eggNOG" id="ENOG502TG9W">
    <property type="taxonomic scope" value="Eukaryota"/>
</dbReference>
<dbReference type="GeneTree" id="ENSGT00940000155541"/>
<dbReference type="HOGENOM" id="CLU_166966_1_0_1"/>
<dbReference type="InParanoid" id="Q96HT8"/>
<dbReference type="OMA" id="IAKMAQM"/>
<dbReference type="OrthoDB" id="9837479at2759"/>
<dbReference type="PAN-GO" id="Q96HT8">
    <property type="GO annotations" value="0 GO annotations based on evolutionary models"/>
</dbReference>
<dbReference type="PhylomeDB" id="Q96HT8"/>
<dbReference type="TreeFam" id="TF338232"/>
<dbReference type="PathwayCommons" id="Q96HT8"/>
<dbReference type="SignaLink" id="Q96HT8"/>
<dbReference type="BioGRID-ORCS" id="114932">
    <property type="hits" value="11 hits in 1154 CRISPR screens"/>
</dbReference>
<dbReference type="ChiTaRS" id="MRFAP1L1">
    <property type="organism name" value="human"/>
</dbReference>
<dbReference type="GenomeRNAi" id="114932"/>
<dbReference type="Pharos" id="Q96HT8">
    <property type="development level" value="Tdark"/>
</dbReference>
<dbReference type="PRO" id="PR:Q96HT8"/>
<dbReference type="Proteomes" id="UP000005640">
    <property type="component" value="Chromosome 4"/>
</dbReference>
<dbReference type="RNAct" id="Q96HT8">
    <property type="molecule type" value="protein"/>
</dbReference>
<dbReference type="Bgee" id="ENSG00000178988">
    <property type="expression patterns" value="Expressed in cortical plate and 215 other cell types or tissues"/>
</dbReference>
<dbReference type="ExpressionAtlas" id="Q96HT8">
    <property type="expression patterns" value="baseline and differential"/>
</dbReference>
<dbReference type="GO" id="GO:0042802">
    <property type="term" value="F:identical protein binding"/>
    <property type="evidence" value="ECO:0000353"/>
    <property type="project" value="IntAct"/>
</dbReference>
<dbReference type="InterPro" id="IPR029254">
    <property type="entry name" value="MRFAP1"/>
</dbReference>
<dbReference type="PANTHER" id="PTHR31324:SF2">
    <property type="entry name" value="MORF4 FAMILY-ASSOCIATED PROTEIN 1-LIKE 1"/>
    <property type="match status" value="1"/>
</dbReference>
<dbReference type="PANTHER" id="PTHR31324">
    <property type="entry name" value="MORF4 FAMILY-ASSOCIATED PROTEIN 1-RELATED"/>
    <property type="match status" value="1"/>
</dbReference>
<dbReference type="Pfam" id="PF15155">
    <property type="entry name" value="MRFAP1"/>
    <property type="match status" value="1"/>
</dbReference>
<evidence type="ECO:0000255" key="1"/>
<evidence type="ECO:0000305" key="2"/>
<accession>Q96HT8</accession>
<accession>B2R6R0</accession>
<accession>Q6NXT8</accession>
<accession>Q9P0J5</accession>
<comment type="interaction">
    <interactant intactId="EBI-748896">
        <id>Q96HT8</id>
    </interactant>
    <interactant intactId="EBI-743598">
        <id>Q9NYB9</id>
        <label>ABI2</label>
    </interactant>
    <organismsDiffer>false</organismsDiffer>
    <experiments>7</experiments>
</comment>
<comment type="interaction">
    <interactant intactId="EBI-748896">
        <id>Q96HT8</id>
    </interactant>
    <interactant intactId="EBI-742038">
        <id>Q9P2A4</id>
        <label>ABI3</label>
    </interactant>
    <organismsDiffer>false</organismsDiffer>
    <experiments>3</experiments>
</comment>
<comment type="interaction">
    <interactant intactId="EBI-748896">
        <id>Q96HT8</id>
    </interactant>
    <interactant intactId="EBI-930964">
        <id>P54253</id>
        <label>ATXN1</label>
    </interactant>
    <organismsDiffer>false</organismsDiffer>
    <experiments>6</experiments>
</comment>
<comment type="interaction">
    <interactant intactId="EBI-748896">
        <id>Q96HT8</id>
    </interactant>
    <interactant intactId="EBI-358049">
        <id>Q13895</id>
        <label>BYSL</label>
    </interactant>
    <organismsDiffer>false</organismsDiffer>
    <experiments>13</experiments>
</comment>
<comment type="interaction">
    <interactant intactId="EBI-748896">
        <id>Q96HT8</id>
    </interactant>
    <interactant intactId="EBI-747505">
        <id>Q8TAB5</id>
        <label>C1orf216</label>
    </interactant>
    <organismsDiffer>false</organismsDiffer>
    <experiments>3</experiments>
</comment>
<comment type="interaction">
    <interactant intactId="EBI-748896">
        <id>Q96HT8</id>
    </interactant>
    <interactant intactId="EBI-2837036">
        <id>Q6ZUJ4</id>
        <label>C3orf62</label>
    </interactant>
    <organismsDiffer>false</organismsDiffer>
    <experiments>4</experiments>
</comment>
<comment type="interaction">
    <interactant intactId="EBI-748896">
        <id>Q96HT8</id>
    </interactant>
    <interactant intactId="EBI-10196469">
        <id>Q8TC20</id>
        <label>CAGE1</label>
    </interactant>
    <organismsDiffer>false</organismsDiffer>
    <experiments>3</experiments>
</comment>
<comment type="interaction">
    <interactant intactId="EBI-748896">
        <id>Q96HT8</id>
    </interactant>
    <interactant intactId="EBI-3893101">
        <id>Q969G5</id>
        <label>CAVIN3</label>
    </interactant>
    <organismsDiffer>false</organismsDiffer>
    <experiments>7</experiments>
</comment>
<comment type="interaction">
    <interactant intactId="EBI-748896">
        <id>Q96HT8</id>
    </interactant>
    <interactant intactId="EBI-1052532">
        <id>O14519</id>
        <label>CDK2AP1</label>
    </interactant>
    <organismsDiffer>false</organismsDiffer>
    <experiments>8</experiments>
</comment>
<comment type="interaction">
    <interactant intactId="EBI-748896">
        <id>Q96HT8</id>
    </interactant>
    <interactant intactId="EBI-2808135">
        <id>O75956</id>
        <label>CDK2AP2</label>
    </interactant>
    <organismsDiffer>false</organismsDiffer>
    <experiments>3</experiments>
</comment>
<comment type="interaction">
    <interactant intactId="EBI-748896">
        <id>Q96HT8</id>
    </interactant>
    <interactant intactId="EBI-6871750">
        <id>Q9BS16</id>
        <label>CENPK</label>
    </interactant>
    <organismsDiffer>false</organismsDiffer>
    <experiments>3</experiments>
</comment>
<comment type="interaction">
    <interactant intactId="EBI-748896">
        <id>Q96HT8</id>
    </interactant>
    <interactant intactId="EBI-744115">
        <id>Q9C0F1</id>
        <label>CEP44</label>
    </interactant>
    <organismsDiffer>false</organismsDiffer>
    <experiments>3</experiments>
</comment>
<comment type="interaction">
    <interactant intactId="EBI-748896">
        <id>Q96HT8</id>
    </interactant>
    <interactant intactId="EBI-10239155">
        <id>Q1MSJ5-2</id>
        <label>CSPP1</label>
    </interactant>
    <organismsDiffer>false</organismsDiffer>
    <experiments>3</experiments>
</comment>
<comment type="interaction">
    <interactant intactId="EBI-748896">
        <id>Q96HT8</id>
    </interactant>
    <interactant intactId="EBI-724649">
        <id>Q6IAV4</id>
        <label>DOC-1R</label>
    </interactant>
    <organismsDiffer>false</organismsDiffer>
    <experiments>3</experiments>
</comment>
<comment type="interaction">
    <interactant intactId="EBI-748896">
        <id>Q96HT8</id>
    </interactant>
    <interactant intactId="EBI-10288660">
        <id>Q53XC2</id>
        <label>EIF2B2</label>
    </interactant>
    <organismsDiffer>false</organismsDiffer>
    <experiments>3</experiments>
</comment>
<comment type="interaction">
    <interactant intactId="EBI-748896">
        <id>Q96HT8</id>
    </interactant>
    <interactant intactId="EBI-10288788">
        <id>Q9BPX4</id>
        <label>EIF2B2</label>
    </interactant>
    <organismsDiffer>false</organismsDiffer>
    <experiments>3</experiments>
</comment>
<comment type="interaction">
    <interactant intactId="EBI-748896">
        <id>Q96HT8</id>
    </interactant>
    <interactant intactId="EBI-1052570">
        <id>O95995</id>
        <label>GAS8</label>
    </interactant>
    <organismsDiffer>false</organismsDiffer>
    <experiments>3</experiments>
</comment>
<comment type="interaction">
    <interactant intactId="EBI-748896">
        <id>Q96HT8</id>
    </interactant>
    <interactant intactId="EBI-372530">
        <id>Q9UHL9</id>
        <label>GTF2IRD1</label>
    </interactant>
    <organismsDiffer>false</organismsDiffer>
    <experiments>3</experiments>
</comment>
<comment type="interaction">
    <interactant intactId="EBI-748896">
        <id>Q96HT8</id>
    </interactant>
    <interactant intactId="EBI-740220">
        <id>O14964</id>
        <label>HGS</label>
    </interactant>
    <organismsDiffer>false</organismsDiffer>
    <experiments>6</experiments>
</comment>
<comment type="interaction">
    <interactant intactId="EBI-748896">
        <id>Q96HT8</id>
    </interactant>
    <interactant intactId="EBI-350145">
        <id>P01112</id>
        <label>HRAS</label>
    </interactant>
    <organismsDiffer>false</organismsDiffer>
    <experiments>3</experiments>
</comment>
<comment type="interaction">
    <interactant intactId="EBI-748896">
        <id>Q96HT8</id>
    </interactant>
    <interactant intactId="EBI-466029">
        <id>P42858</id>
        <label>HTT</label>
    </interactant>
    <organismsDiffer>false</organismsDiffer>
    <experiments>21</experiments>
</comment>
<comment type="interaction">
    <interactant intactId="EBI-748896">
        <id>Q96HT8</id>
    </interactant>
    <interactant intactId="EBI-8638439">
        <id>Q8IYA8</id>
        <label>IHO1</label>
    </interactant>
    <organismsDiffer>false</organismsDiffer>
    <experiments>7</experiments>
</comment>
<comment type="interaction">
    <interactant intactId="EBI-748896">
        <id>Q96HT8</id>
    </interactant>
    <interactant intactId="EBI-10975473">
        <id>O60333-2</id>
        <label>KIF1B</label>
    </interactant>
    <organismsDiffer>false</organismsDiffer>
    <experiments>3</experiments>
</comment>
<comment type="interaction">
    <interactant intactId="EBI-748896">
        <id>Q96HT8</id>
    </interactant>
    <interactant intactId="EBI-948266">
        <id>O14901</id>
        <label>KLF11</label>
    </interactant>
    <organismsDiffer>false</organismsDiffer>
    <experiments>3</experiments>
</comment>
<comment type="interaction">
    <interactant intactId="EBI-748896">
        <id>Q96HT8</id>
    </interactant>
    <interactant intactId="EBI-739696">
        <id>P25791</id>
        <label>LMO2</label>
    </interactant>
    <organismsDiffer>false</organismsDiffer>
    <experiments>3</experiments>
</comment>
<comment type="interaction">
    <interactant intactId="EBI-748896">
        <id>Q96HT8</id>
    </interactant>
    <interactant intactId="EBI-739832">
        <id>Q8TBB1</id>
        <label>LNX1</label>
    </interactant>
    <organismsDiffer>false</organismsDiffer>
    <experiments>7</experiments>
</comment>
<comment type="interaction">
    <interactant intactId="EBI-748896">
        <id>Q96HT8</id>
    </interactant>
    <interactant intactId="EBI-2340947">
        <id>Q8N448</id>
        <label>LNX2</label>
    </interactant>
    <organismsDiffer>false</organismsDiffer>
    <experiments>4</experiments>
</comment>
<comment type="interaction">
    <interactant intactId="EBI-748896">
        <id>Q96HT8</id>
    </interactant>
    <interactant intactId="EBI-73995">
        <id>P27361</id>
        <label>MAPK3</label>
    </interactant>
    <organismsDiffer>false</organismsDiffer>
    <experiments>3</experiments>
</comment>
<comment type="interaction">
    <interactant intactId="EBI-748896">
        <id>Q96HT8</id>
    </interactant>
    <interactant intactId="EBI-748397">
        <id>P50222</id>
        <label>MEOX2</label>
    </interactant>
    <organismsDiffer>false</organismsDiffer>
    <experiments>3</experiments>
</comment>
<comment type="interaction">
    <interactant intactId="EBI-748896">
        <id>Q96HT8</id>
    </interactant>
    <interactant intactId="EBI-399246">
        <id>Q9UBU8</id>
        <label>MORF4L1</label>
    </interactant>
    <organismsDiffer>false</organismsDiffer>
    <experiments>12</experiments>
</comment>
<comment type="interaction">
    <interactant intactId="EBI-748896">
        <id>Q96HT8</id>
    </interactant>
    <interactant intactId="EBI-10288852">
        <id>Q9UBU8-2</id>
        <label>MORF4L1</label>
    </interactant>
    <organismsDiffer>false</organismsDiffer>
    <experiments>27</experiments>
</comment>
<comment type="interaction">
    <interactant intactId="EBI-748896">
        <id>Q96HT8</id>
    </interactant>
    <interactant intactId="EBI-399257">
        <id>Q15014</id>
        <label>MORF4L2</label>
    </interactant>
    <organismsDiffer>false</organismsDiffer>
    <experiments>14</experiments>
</comment>
<comment type="interaction">
    <interactant intactId="EBI-748896">
        <id>Q96HT8</id>
    </interactant>
    <interactant intactId="EBI-995714">
        <id>Q9Y605</id>
        <label>MRFAP1</label>
    </interactant>
    <organismsDiffer>false</organismsDiffer>
    <experiments>9</experiments>
</comment>
<comment type="interaction">
    <interactant intactId="EBI-748896">
        <id>Q96HT8</id>
    </interactant>
    <interactant intactId="EBI-748896">
        <id>Q96HT8</id>
        <label>MRFAP1L1</label>
    </interactant>
    <organismsDiffer>false</organismsDiffer>
    <experiments>11</experiments>
</comment>
<comment type="interaction">
    <interactant intactId="EBI-748896">
        <id>Q96HT8</id>
    </interactant>
    <interactant intactId="EBI-741158">
        <id>Q96HA8</id>
        <label>NTAQ1</label>
    </interactant>
    <organismsDiffer>false</organismsDiffer>
    <experiments>3</experiments>
</comment>
<comment type="interaction">
    <interactant intactId="EBI-748896">
        <id>Q96HT8</id>
    </interactant>
    <interactant intactId="EBI-10232538">
        <id>Q8WWB5</id>
        <label>PIH1D2</label>
    </interactant>
    <organismsDiffer>false</organismsDiffer>
    <experiments>8</experiments>
</comment>
<comment type="interaction">
    <interactant intactId="EBI-748896">
        <id>Q96HT8</id>
    </interactant>
    <interactant intactId="EBI-346930">
        <id>O00459</id>
        <label>PIK3R2</label>
    </interactant>
    <organismsDiffer>false</organismsDiffer>
    <experiments>4</experiments>
</comment>
<comment type="interaction">
    <interactant intactId="EBI-748896">
        <id>Q96HT8</id>
    </interactant>
    <interactant intactId="EBI-749195">
        <id>P60891</id>
        <label>PRPS1</label>
    </interactant>
    <organismsDiffer>false</organismsDiffer>
    <experiments>3</experiments>
</comment>
<comment type="interaction">
    <interactant intactId="EBI-748896">
        <id>Q96HT8</id>
    </interactant>
    <interactant intactId="EBI-2010251">
        <id>P49810</id>
        <label>PSEN2</label>
    </interactant>
    <organismsDiffer>false</organismsDiffer>
    <experiments>3</experiments>
</comment>
<comment type="interaction">
    <interactant intactId="EBI-748896">
        <id>Q96HT8</id>
    </interactant>
    <interactant intactId="EBI-359352">
        <id>P25786</id>
        <label>PSMA1</label>
    </interactant>
    <organismsDiffer>false</organismsDiffer>
    <experiments>4</experiments>
</comment>
<comment type="interaction">
    <interactant intactId="EBI-748896">
        <id>Q96HT8</id>
    </interactant>
    <interactant intactId="EBI-744267">
        <id>Q96JH8</id>
        <label>RADIL</label>
    </interactant>
    <organismsDiffer>false</organismsDiffer>
    <experiments>3</experiments>
</comment>
<comment type="interaction">
    <interactant intactId="EBI-748896">
        <id>Q96HT8</id>
    </interactant>
    <interactant intactId="EBI-10288724">
        <id>Q8NG50</id>
        <label>RDM1</label>
    </interactant>
    <organismsDiffer>false</organismsDiffer>
    <experiments>3</experiments>
</comment>
<comment type="interaction">
    <interactant intactId="EBI-748896">
        <id>Q96HT8</id>
    </interactant>
    <interactant intactId="EBI-727004">
        <id>O00560</id>
        <label>SDCBP</label>
    </interactant>
    <organismsDiffer>false</organismsDiffer>
    <experiments>8</experiments>
</comment>
<comment type="interaction">
    <interactant intactId="EBI-748896">
        <id>Q96HT8</id>
    </interactant>
    <interactant intactId="EBI-1104535">
        <id>Q86XK3</id>
        <label>SFR1</label>
    </interactant>
    <organismsDiffer>false</organismsDiffer>
    <experiments>3</experiments>
</comment>
<comment type="interaction">
    <interactant intactId="EBI-748896">
        <id>Q96HT8</id>
    </interactant>
    <interactant intactId="EBI-455078">
        <id>Q969G3</id>
        <label>SMARCE1</label>
    </interactant>
    <organismsDiffer>false</organismsDiffer>
    <experiments>3</experiments>
</comment>
<comment type="interaction">
    <interactant intactId="EBI-748896">
        <id>Q96HT8</id>
    </interactant>
    <interactant intactId="EBI-298027">
        <id>Q2TAY7</id>
        <label>SMU1</label>
    </interactant>
    <organismsDiffer>false</organismsDiffer>
    <experiments>9</experiments>
</comment>
<comment type="interaction">
    <interactant intactId="EBI-748896">
        <id>Q96HT8</id>
    </interactant>
    <interactant intactId="EBI-6872807">
        <id>Q8N0S2</id>
        <label>SYCE1</label>
    </interactant>
    <organismsDiffer>false</organismsDiffer>
    <experiments>3</experiments>
</comment>
<comment type="interaction">
    <interactant intactId="EBI-748896">
        <id>Q96HT8</id>
    </interactant>
    <interactant intactId="EBI-533224">
        <id>P15884</id>
        <label>TCF4</label>
    </interactant>
    <organismsDiffer>false</organismsDiffer>
    <experiments>3</experiments>
</comment>
<comment type="interaction">
    <interactant intactId="EBI-748896">
        <id>Q96HT8</id>
    </interactant>
    <interactant intactId="EBI-2800657">
        <id>Q8IUX1</id>
        <label>TMEM126B</label>
    </interactant>
    <organismsDiffer>false</organismsDiffer>
    <experiments>3</experiments>
</comment>
<comment type="interaction">
    <interactant intactId="EBI-748896">
        <id>Q96HT8</id>
    </interactant>
    <interactant intactId="EBI-2932492">
        <id>Q99757</id>
        <label>TXN2</label>
    </interactant>
    <organismsDiffer>false</organismsDiffer>
    <experiments>6</experiments>
</comment>
<comment type="interaction">
    <interactant intactId="EBI-748896">
        <id>Q96HT8</id>
    </interactant>
    <interactant intactId="EBI-745871">
        <id>Q9HAC8</id>
        <label>UBTD1</label>
    </interactant>
    <organismsDiffer>false</organismsDiffer>
    <experiments>8</experiments>
</comment>
<comment type="interaction">
    <interactant intactId="EBI-748896">
        <id>Q96HT8</id>
    </interactant>
    <interactant intactId="EBI-720609">
        <id>O76024</id>
        <label>WFS1</label>
    </interactant>
    <organismsDiffer>false</organismsDiffer>
    <experiments>3</experiments>
</comment>
<comment type="interaction">
    <interactant intactId="EBI-748896">
        <id>Q96HT8</id>
    </interactant>
    <interactant intactId="EBI-740727">
        <id>Q8TAU3</id>
        <label>ZNF417</label>
    </interactant>
    <organismsDiffer>false</organismsDiffer>
    <experiments>3</experiments>
</comment>
<comment type="similarity">
    <text evidence="2">Belongs to the MORF4 family-associated protein family.</text>
</comment>
<comment type="sequence caution" evidence="2">
    <conflict type="frameshift">
        <sequence resource="EMBL-CDS" id="AAF67011"/>
    </conflict>
</comment>